<evidence type="ECO:0000250" key="1"/>
<evidence type="ECO:0000250" key="2">
    <source>
        <dbReference type="UniProtKB" id="Q969U7"/>
    </source>
</evidence>
<evidence type="ECO:0000250" key="3">
    <source>
        <dbReference type="UniProtKB" id="Q9EST4"/>
    </source>
</evidence>
<evidence type="ECO:0000255" key="4"/>
<evidence type="ECO:0000312" key="5">
    <source>
        <dbReference type="EMBL" id="AAH84517.1"/>
    </source>
</evidence>
<accession>Q5XGC5</accession>
<comment type="function">
    <text evidence="1">Chaperone protein which promotes assembly of the 20S proteasome as part of a heterodimer with psmg1.</text>
</comment>
<comment type="subunit">
    <text evidence="1">Forms a heterodimer with psmg1.</text>
</comment>
<comment type="subcellular location">
    <subcellularLocation>
        <location evidence="3">Nucleus</location>
    </subcellularLocation>
</comment>
<comment type="PTM">
    <text evidence="2">Degraded by the proteasome upon completion of 20S proteasome maturation.</text>
</comment>
<comment type="similarity">
    <text evidence="4">Belongs to the PSMG2 family.</text>
</comment>
<keyword id="KW-0143">Chaperone</keyword>
<keyword id="KW-0539">Nucleus</keyword>
<keyword id="KW-1185">Reference proteome</keyword>
<sequence length="261" mass="29128">MFVPIGSEQDFPSDYTLLLPAISVGNVGQLAIDLIISTLKIPKVGYFYTDCLVPMVGSNPYETDEENAKELCTNAEVYALPSQKLAVLQLRSLVIKKKSKSFRQALVSWIKRCAFARVILLSSCHAYHRDDTQLFGTPFRYLVTPALQKSVADVLKELEWKEMEKVSSYPGLNDNEKRVFIPGGGFTKRFYDDCCLEDLQMAVVLKFCSEGDNVPDAFSLLNQVNEWLHLVASTNGDVLAKWKAPGSWQLLFGSGLPAAIF</sequence>
<dbReference type="EMBL" id="BC084517">
    <property type="protein sequence ID" value="AAH84517.1"/>
    <property type="molecule type" value="mRNA"/>
</dbReference>
<dbReference type="RefSeq" id="NP_001011145.1">
    <property type="nucleotide sequence ID" value="NM_001011145.1"/>
</dbReference>
<dbReference type="SMR" id="Q5XGC5"/>
<dbReference type="FunCoup" id="Q5XGC5">
    <property type="interactions" value="2871"/>
</dbReference>
<dbReference type="STRING" id="8364.ENSXETP00000016918"/>
<dbReference type="PaxDb" id="8364-ENSXETP00000042581"/>
<dbReference type="GeneID" id="496562"/>
<dbReference type="KEGG" id="xtr:496562"/>
<dbReference type="AGR" id="Xenbase:XB-GENE-1003808"/>
<dbReference type="CTD" id="56984"/>
<dbReference type="Xenbase" id="XB-GENE-1003808">
    <property type="gene designation" value="psmg2"/>
</dbReference>
<dbReference type="eggNOG" id="KOG3112">
    <property type="taxonomic scope" value="Eukaryota"/>
</dbReference>
<dbReference type="HOGENOM" id="CLU_062640_0_1_1"/>
<dbReference type="InParanoid" id="Q5XGC5"/>
<dbReference type="OMA" id="WKEHTGE"/>
<dbReference type="OrthoDB" id="10260712at2759"/>
<dbReference type="PhylomeDB" id="Q5XGC5"/>
<dbReference type="TreeFam" id="TF105397"/>
<dbReference type="Reactome" id="R-XTR-9907900">
    <property type="pathway name" value="Proteasome assembly"/>
</dbReference>
<dbReference type="Proteomes" id="UP000008143">
    <property type="component" value="Chromosome 6"/>
</dbReference>
<dbReference type="Bgee" id="ENSXETG00000019670">
    <property type="expression patterns" value="Expressed in egg cell and 13 other cell types or tissues"/>
</dbReference>
<dbReference type="GO" id="GO:0005634">
    <property type="term" value="C:nucleus"/>
    <property type="evidence" value="ECO:0000250"/>
    <property type="project" value="UniProtKB"/>
</dbReference>
<dbReference type="GO" id="GO:0051131">
    <property type="term" value="P:chaperone-mediated protein complex assembly"/>
    <property type="evidence" value="ECO:0000250"/>
    <property type="project" value="UniProtKB"/>
</dbReference>
<dbReference type="FunFam" id="3.40.50.10900:FF:000001">
    <property type="entry name" value="Proteasome assembly chaperone 2"/>
    <property type="match status" value="1"/>
</dbReference>
<dbReference type="Gene3D" id="3.40.50.10900">
    <property type="entry name" value="PAC-like subunit"/>
    <property type="match status" value="1"/>
</dbReference>
<dbReference type="InterPro" id="IPR019151">
    <property type="entry name" value="Proteasome_assmbl_chaperone_2"/>
</dbReference>
<dbReference type="InterPro" id="IPR016562">
    <property type="entry name" value="Proteasome_assmbl_chp_2_euk"/>
</dbReference>
<dbReference type="InterPro" id="IPR038389">
    <property type="entry name" value="PSMG2_sf"/>
</dbReference>
<dbReference type="PANTHER" id="PTHR12970">
    <property type="entry name" value="PROTEASOME ASSEMBLY CHAPERONE 2"/>
    <property type="match status" value="1"/>
</dbReference>
<dbReference type="PANTHER" id="PTHR12970:SF1">
    <property type="entry name" value="PROTEASOME ASSEMBLY CHAPERONE 2"/>
    <property type="match status" value="1"/>
</dbReference>
<dbReference type="Pfam" id="PF09754">
    <property type="entry name" value="PAC2"/>
    <property type="match status" value="1"/>
</dbReference>
<dbReference type="PIRSF" id="PIRSF010044">
    <property type="entry name" value="UCP010044"/>
    <property type="match status" value="1"/>
</dbReference>
<dbReference type="SUPFAM" id="SSF159659">
    <property type="entry name" value="Cgl1923-like"/>
    <property type="match status" value="1"/>
</dbReference>
<organism>
    <name type="scientific">Xenopus tropicalis</name>
    <name type="common">Western clawed frog</name>
    <name type="synonym">Silurana tropicalis</name>
    <dbReference type="NCBI Taxonomy" id="8364"/>
    <lineage>
        <taxon>Eukaryota</taxon>
        <taxon>Metazoa</taxon>
        <taxon>Chordata</taxon>
        <taxon>Craniata</taxon>
        <taxon>Vertebrata</taxon>
        <taxon>Euteleostomi</taxon>
        <taxon>Amphibia</taxon>
        <taxon>Batrachia</taxon>
        <taxon>Anura</taxon>
        <taxon>Pipoidea</taxon>
        <taxon>Pipidae</taxon>
        <taxon>Xenopodinae</taxon>
        <taxon>Xenopus</taxon>
        <taxon>Silurana</taxon>
    </lineage>
</organism>
<proteinExistence type="evidence at transcript level"/>
<protein>
    <recommendedName>
        <fullName>Proteasome assembly chaperone 2</fullName>
    </recommendedName>
</protein>
<name>PSMG2_XENTR</name>
<gene>
    <name evidence="2" type="primary">psmg2</name>
</gene>
<feature type="chain" id="PRO_0000322556" description="Proteasome assembly chaperone 2">
    <location>
        <begin position="1"/>
        <end position="261"/>
    </location>
</feature>
<reference evidence="5" key="1">
    <citation type="submission" date="2004-10" db="EMBL/GenBank/DDBJ databases">
        <authorList>
            <consortium name="NIH - Xenopus Gene Collection (XGC) project"/>
        </authorList>
    </citation>
    <scope>NUCLEOTIDE SEQUENCE [LARGE SCALE MRNA]</scope>
    <source>
        <tissue evidence="5">Embryo</tissue>
    </source>
</reference>